<reference key="1">
    <citation type="journal article" date="2006" name="Mol. Microbiol.">
        <title>Role of pathogenicity island-associated integrases in the genome plasticity of uropathogenic Escherichia coli strain 536.</title>
        <authorList>
            <person name="Hochhut B."/>
            <person name="Wilde C."/>
            <person name="Balling G."/>
            <person name="Middendorf B."/>
            <person name="Dobrindt U."/>
            <person name="Brzuszkiewicz E."/>
            <person name="Gottschalk G."/>
            <person name="Carniel E."/>
            <person name="Hacker J."/>
        </authorList>
    </citation>
    <scope>NUCLEOTIDE SEQUENCE [LARGE SCALE GENOMIC DNA]</scope>
    <source>
        <strain>536 / UPEC</strain>
    </source>
</reference>
<keyword id="KW-0997">Cell inner membrane</keyword>
<keyword id="KW-1003">Cell membrane</keyword>
<keyword id="KW-0472">Membrane</keyword>
<keyword id="KW-0511">Multifunctional enzyme</keyword>
<keyword id="KW-0520">NAD</keyword>
<keyword id="KW-0874">Quinone</keyword>
<keyword id="KW-1278">Translocase</keyword>
<keyword id="KW-0813">Transport</keyword>
<keyword id="KW-0830">Ubiquinone</keyword>
<name>NUOCD_ECOL5</name>
<feature type="chain" id="PRO_0000358640" description="NADH-quinone oxidoreductase subunit C/D">
    <location>
        <begin position="1"/>
        <end position="596"/>
    </location>
</feature>
<feature type="region of interest" description="NADH dehydrogenase I subunit C" evidence="1">
    <location>
        <begin position="1"/>
        <end position="186"/>
    </location>
</feature>
<feature type="region of interest" description="NADH dehydrogenase I subunit D" evidence="1">
    <location>
        <begin position="210"/>
        <end position="596"/>
    </location>
</feature>
<proteinExistence type="inferred from homology"/>
<evidence type="ECO:0000255" key="1">
    <source>
        <dbReference type="HAMAP-Rule" id="MF_01359"/>
    </source>
</evidence>
<gene>
    <name evidence="1" type="primary">nuoC</name>
    <name evidence="1" type="synonym">nuoCD</name>
    <name evidence="1" type="synonym">nuoD</name>
    <name type="ordered locus">ECP_2325</name>
</gene>
<dbReference type="EC" id="7.1.1.-" evidence="1"/>
<dbReference type="EMBL" id="CP000247">
    <property type="protein sequence ID" value="ABG70319.1"/>
    <property type="molecule type" value="Genomic_DNA"/>
</dbReference>
<dbReference type="SMR" id="Q0TFG0"/>
<dbReference type="KEGG" id="ecp:ECP_2325"/>
<dbReference type="HOGENOM" id="CLU_015134_3_2_6"/>
<dbReference type="Proteomes" id="UP000009182">
    <property type="component" value="Chromosome"/>
</dbReference>
<dbReference type="GO" id="GO:0030964">
    <property type="term" value="C:NADH dehydrogenase complex"/>
    <property type="evidence" value="ECO:0007669"/>
    <property type="project" value="InterPro"/>
</dbReference>
<dbReference type="GO" id="GO:0005886">
    <property type="term" value="C:plasma membrane"/>
    <property type="evidence" value="ECO:0007669"/>
    <property type="project" value="UniProtKB-SubCell"/>
</dbReference>
<dbReference type="GO" id="GO:0051287">
    <property type="term" value="F:NAD binding"/>
    <property type="evidence" value="ECO:0007669"/>
    <property type="project" value="InterPro"/>
</dbReference>
<dbReference type="GO" id="GO:0008137">
    <property type="term" value="F:NADH dehydrogenase (ubiquinone) activity"/>
    <property type="evidence" value="ECO:0007669"/>
    <property type="project" value="InterPro"/>
</dbReference>
<dbReference type="GO" id="GO:0050136">
    <property type="term" value="F:NADH:ubiquinone reductase (non-electrogenic) activity"/>
    <property type="evidence" value="ECO:0007669"/>
    <property type="project" value="UniProtKB-UniRule"/>
</dbReference>
<dbReference type="GO" id="GO:0048038">
    <property type="term" value="F:quinone binding"/>
    <property type="evidence" value="ECO:0007669"/>
    <property type="project" value="UniProtKB-KW"/>
</dbReference>
<dbReference type="FunFam" id="1.10.645.10:FF:000001">
    <property type="entry name" value="NADH-quinone oxidoreductase subunit C/D"/>
    <property type="match status" value="1"/>
</dbReference>
<dbReference type="FunFam" id="3.30.460.80:FF:000001">
    <property type="entry name" value="NADH-quinone oxidoreductase subunit C/D"/>
    <property type="match status" value="1"/>
</dbReference>
<dbReference type="Gene3D" id="1.10.645.10">
    <property type="entry name" value="Cytochrome-c3 Hydrogenase, chain B"/>
    <property type="match status" value="1"/>
</dbReference>
<dbReference type="Gene3D" id="3.30.460.80">
    <property type="entry name" value="NADH:ubiquinone oxidoreductase, 30kDa subunit"/>
    <property type="match status" value="1"/>
</dbReference>
<dbReference type="HAMAP" id="MF_01357">
    <property type="entry name" value="NDH1_NuoC"/>
    <property type="match status" value="1"/>
</dbReference>
<dbReference type="HAMAP" id="MF_01359">
    <property type="entry name" value="NDH1_NuoCD_1"/>
    <property type="match status" value="1"/>
</dbReference>
<dbReference type="HAMAP" id="MF_01358">
    <property type="entry name" value="NDH1_NuoD"/>
    <property type="match status" value="1"/>
</dbReference>
<dbReference type="InterPro" id="IPR010218">
    <property type="entry name" value="NADH_DH_suC"/>
</dbReference>
<dbReference type="InterPro" id="IPR023062">
    <property type="entry name" value="NADH_DH_suCD"/>
</dbReference>
<dbReference type="InterPro" id="IPR001135">
    <property type="entry name" value="NADH_Q_OxRdtase_suD"/>
</dbReference>
<dbReference type="InterPro" id="IPR037232">
    <property type="entry name" value="NADH_quin_OxRdtase_su_C/D-like"/>
</dbReference>
<dbReference type="InterPro" id="IPR001268">
    <property type="entry name" value="NADH_UbQ_OxRdtase_30kDa_su"/>
</dbReference>
<dbReference type="InterPro" id="IPR014029">
    <property type="entry name" value="NADH_UbQ_OxRdtase_49kDa_CS"/>
</dbReference>
<dbReference type="InterPro" id="IPR020396">
    <property type="entry name" value="NADH_UbQ_OxRdtase_CS"/>
</dbReference>
<dbReference type="InterPro" id="IPR022885">
    <property type="entry name" value="NDH1_su_D/H"/>
</dbReference>
<dbReference type="InterPro" id="IPR029014">
    <property type="entry name" value="NiFe-Hase_large"/>
</dbReference>
<dbReference type="NCBIfam" id="TIGR01961">
    <property type="entry name" value="NuoC_fam"/>
    <property type="match status" value="1"/>
</dbReference>
<dbReference type="NCBIfam" id="TIGR01962">
    <property type="entry name" value="NuoD"/>
    <property type="match status" value="1"/>
</dbReference>
<dbReference type="NCBIfam" id="NF004739">
    <property type="entry name" value="PRK06075.1"/>
    <property type="match status" value="1"/>
</dbReference>
<dbReference type="NCBIfam" id="NF008728">
    <property type="entry name" value="PRK11742.1"/>
    <property type="match status" value="1"/>
</dbReference>
<dbReference type="PANTHER" id="PTHR11993:SF45">
    <property type="entry name" value="NADH-QUINONE OXIDOREDUCTASE SUBUNIT C_D"/>
    <property type="match status" value="1"/>
</dbReference>
<dbReference type="PANTHER" id="PTHR11993">
    <property type="entry name" value="NADH-UBIQUINONE OXIDOREDUCTASE 49 KDA SUBUNIT"/>
    <property type="match status" value="1"/>
</dbReference>
<dbReference type="Pfam" id="PF00329">
    <property type="entry name" value="Complex1_30kDa"/>
    <property type="match status" value="1"/>
</dbReference>
<dbReference type="Pfam" id="PF00346">
    <property type="entry name" value="Complex1_49kDa"/>
    <property type="match status" value="1"/>
</dbReference>
<dbReference type="SUPFAM" id="SSF56762">
    <property type="entry name" value="HydB/Nqo4-like"/>
    <property type="match status" value="1"/>
</dbReference>
<dbReference type="SUPFAM" id="SSF143243">
    <property type="entry name" value="Nqo5-like"/>
    <property type="match status" value="1"/>
</dbReference>
<dbReference type="PROSITE" id="PS00542">
    <property type="entry name" value="COMPLEX1_30K"/>
    <property type="match status" value="1"/>
</dbReference>
<dbReference type="PROSITE" id="PS00535">
    <property type="entry name" value="COMPLEX1_49K"/>
    <property type="match status" value="1"/>
</dbReference>
<accession>Q0TFG0</accession>
<organism>
    <name type="scientific">Escherichia coli O6:K15:H31 (strain 536 / UPEC)</name>
    <dbReference type="NCBI Taxonomy" id="362663"/>
    <lineage>
        <taxon>Bacteria</taxon>
        <taxon>Pseudomonadati</taxon>
        <taxon>Pseudomonadota</taxon>
        <taxon>Gammaproteobacteria</taxon>
        <taxon>Enterobacterales</taxon>
        <taxon>Enterobacteriaceae</taxon>
        <taxon>Escherichia</taxon>
    </lineage>
</organism>
<comment type="function">
    <text evidence="1">NDH-1 shuttles electrons from NADH, via FMN and iron-sulfur (Fe-S) centers, to quinones in the respiratory chain. The immediate electron acceptor for the enzyme in this species is believed to be ubiquinone. Couples the redox reaction to proton translocation (for every two electrons transferred, four hydrogen ions are translocated across the cytoplasmic membrane), and thus conserves the redox energy in a proton gradient.</text>
</comment>
<comment type="catalytic activity">
    <reaction evidence="1">
        <text>a quinone + NADH + 5 H(+)(in) = a quinol + NAD(+) + 4 H(+)(out)</text>
        <dbReference type="Rhea" id="RHEA:57888"/>
        <dbReference type="ChEBI" id="CHEBI:15378"/>
        <dbReference type="ChEBI" id="CHEBI:24646"/>
        <dbReference type="ChEBI" id="CHEBI:57540"/>
        <dbReference type="ChEBI" id="CHEBI:57945"/>
        <dbReference type="ChEBI" id="CHEBI:132124"/>
    </reaction>
</comment>
<comment type="subunit">
    <text evidence="1">NDH-1 is composed of 13 different subunits. Subunits NuoB, CD, E, F, and G constitute the peripheral sector of the complex.</text>
</comment>
<comment type="subcellular location">
    <subcellularLocation>
        <location evidence="1">Cell inner membrane</location>
        <topology evidence="1">Peripheral membrane protein</topology>
        <orientation evidence="1">Cytoplasmic side</orientation>
    </subcellularLocation>
</comment>
<comment type="similarity">
    <text evidence="1">In the N-terminal section; belongs to the complex I 30 kDa subunit family.</text>
</comment>
<comment type="similarity">
    <text evidence="1">In the C-terminal section; belongs to the complex I 49 kDa subunit family.</text>
</comment>
<sequence>MTDLTAQEPAWQTRDHLDDPVIGELRNRFGPDAFTVQATRTGVPVVWIKREQLLEVGDFLKKLPKPYVMLFDLHGMDERLRTHREGLPAADFSVFYHLISIDRNRDIMLKVALAENDLHVPTFTKLFPNANWYERETWDLFGITFDGHPNLRRIMMPQTWKGHPLRKDYPARATEFSPFELTKAKQDLEMEALTFKPEEWGMKRGTENEDFMFLNLGPNHPSAHGAFRIVLQLDGEEIVDCVPDIGYHHRGAEKMGERQSWHSYIPYTDRIEYLGGCVNEMPYVLAVEKLAGITVPDRVNVIRVMLSELFRINSHLLYISTFIQDVGAMTPVFFAFTDRQKIYDLVEAITGFRMHPAWFRIGGVAHDLPRGWDRLLREFLDWMPKRLASYEKAALQNTILKGRSQGVAAYGAKEALEWGTTGAGLRATGIDFDVRKARPYSGYENFDFEIPVGGGVSDCYTRVMLKVEELRQSLRILEQCLNNMPEGPFKADHPLTTPPPKERTLQHIETLITHFLQVSWGPVMPANESFQMIEATKGINSYYLTSDGSTMSYRTRIRTPSYAHLQQIPAAIRGSLVSDLIVYLGSIDFVMSDVDR</sequence>
<protein>
    <recommendedName>
        <fullName evidence="1">NADH-quinone oxidoreductase subunit C/D</fullName>
        <ecNumber evidence="1">7.1.1.-</ecNumber>
    </recommendedName>
    <alternativeName>
        <fullName evidence="1">NADH dehydrogenase I subunit C/D</fullName>
    </alternativeName>
    <alternativeName>
        <fullName evidence="1">NDH-1 subunit C/D</fullName>
    </alternativeName>
</protein>